<keyword id="KW-1185">Reference proteome</keyword>
<keyword id="KW-0687">Ribonucleoprotein</keyword>
<keyword id="KW-0689">Ribosomal protein</keyword>
<keyword id="KW-0694">RNA-binding</keyword>
<keyword id="KW-0699">rRNA-binding</keyword>
<feature type="chain" id="PRO_1000126528" description="Small ribosomal subunit protein bS20">
    <location>
        <begin position="1"/>
        <end position="92"/>
    </location>
</feature>
<name>RS20_THEAB</name>
<gene>
    <name evidence="1" type="primary">rpsT</name>
    <name type="ordered locus">THA_109</name>
</gene>
<proteinExistence type="inferred from homology"/>
<comment type="function">
    <text evidence="1">Binds directly to 16S ribosomal RNA.</text>
</comment>
<comment type="similarity">
    <text evidence="1">Belongs to the bacterial ribosomal protein bS20 family.</text>
</comment>
<protein>
    <recommendedName>
        <fullName evidence="1">Small ribosomal subunit protein bS20</fullName>
    </recommendedName>
    <alternativeName>
        <fullName evidence="2">30S ribosomal protein S20</fullName>
    </alternativeName>
</protein>
<reference key="1">
    <citation type="journal article" date="2009" name="J. Bacteriol.">
        <title>The genome of Thermosipho africanus TCF52B: lateral genetic connections to the Firmicutes and Archaea.</title>
        <authorList>
            <person name="Nesboe C.L."/>
            <person name="Bapteste E."/>
            <person name="Curtis B."/>
            <person name="Dahle H."/>
            <person name="Lopez P."/>
            <person name="Macleod D."/>
            <person name="Dlutek M."/>
            <person name="Bowman S."/>
            <person name="Zhaxybayeva O."/>
            <person name="Birkeland N.-K."/>
            <person name="Doolittle W.F."/>
        </authorList>
    </citation>
    <scope>NUCLEOTIDE SEQUENCE [LARGE SCALE GENOMIC DNA]</scope>
    <source>
        <strain>TCF52B</strain>
    </source>
</reference>
<sequence>MPNIKSAKKRVKVSERNRLINKAYKTRMKNSIKKVLLALQEGKSREEVEQLYKVAQSAIDKAAKIGAIHKNQASRRKSRLIAKINKHFASKE</sequence>
<organism>
    <name type="scientific">Thermosipho africanus (strain TCF52B)</name>
    <dbReference type="NCBI Taxonomy" id="484019"/>
    <lineage>
        <taxon>Bacteria</taxon>
        <taxon>Thermotogati</taxon>
        <taxon>Thermotogota</taxon>
        <taxon>Thermotogae</taxon>
        <taxon>Thermotogales</taxon>
        <taxon>Fervidobacteriaceae</taxon>
        <taxon>Thermosipho</taxon>
    </lineage>
</organism>
<evidence type="ECO:0000255" key="1">
    <source>
        <dbReference type="HAMAP-Rule" id="MF_00500"/>
    </source>
</evidence>
<evidence type="ECO:0000305" key="2"/>
<dbReference type="EMBL" id="CP001185">
    <property type="protein sequence ID" value="ACJ74617.1"/>
    <property type="molecule type" value="Genomic_DNA"/>
</dbReference>
<dbReference type="RefSeq" id="WP_004103501.1">
    <property type="nucleotide sequence ID" value="NC_011653.1"/>
</dbReference>
<dbReference type="SMR" id="B7IEV3"/>
<dbReference type="STRING" id="484019.THA_109"/>
<dbReference type="KEGG" id="taf:THA_109"/>
<dbReference type="eggNOG" id="COG0268">
    <property type="taxonomic scope" value="Bacteria"/>
</dbReference>
<dbReference type="HOGENOM" id="CLU_160655_5_0_0"/>
<dbReference type="OrthoDB" id="9808392at2"/>
<dbReference type="Proteomes" id="UP000002453">
    <property type="component" value="Chromosome"/>
</dbReference>
<dbReference type="GO" id="GO:0005829">
    <property type="term" value="C:cytosol"/>
    <property type="evidence" value="ECO:0007669"/>
    <property type="project" value="TreeGrafter"/>
</dbReference>
<dbReference type="GO" id="GO:0015935">
    <property type="term" value="C:small ribosomal subunit"/>
    <property type="evidence" value="ECO:0007669"/>
    <property type="project" value="TreeGrafter"/>
</dbReference>
<dbReference type="GO" id="GO:0070181">
    <property type="term" value="F:small ribosomal subunit rRNA binding"/>
    <property type="evidence" value="ECO:0007669"/>
    <property type="project" value="TreeGrafter"/>
</dbReference>
<dbReference type="GO" id="GO:0003735">
    <property type="term" value="F:structural constituent of ribosome"/>
    <property type="evidence" value="ECO:0007669"/>
    <property type="project" value="InterPro"/>
</dbReference>
<dbReference type="GO" id="GO:0006412">
    <property type="term" value="P:translation"/>
    <property type="evidence" value="ECO:0007669"/>
    <property type="project" value="UniProtKB-UniRule"/>
</dbReference>
<dbReference type="FunFam" id="1.20.58.110:FF:000001">
    <property type="entry name" value="30S ribosomal protein S20"/>
    <property type="match status" value="1"/>
</dbReference>
<dbReference type="Gene3D" id="1.20.58.110">
    <property type="entry name" value="Ribosomal protein S20"/>
    <property type="match status" value="1"/>
</dbReference>
<dbReference type="HAMAP" id="MF_00500">
    <property type="entry name" value="Ribosomal_bS20"/>
    <property type="match status" value="1"/>
</dbReference>
<dbReference type="InterPro" id="IPR002583">
    <property type="entry name" value="Ribosomal_bS20"/>
</dbReference>
<dbReference type="InterPro" id="IPR036510">
    <property type="entry name" value="Ribosomal_bS20_sf"/>
</dbReference>
<dbReference type="NCBIfam" id="TIGR00029">
    <property type="entry name" value="S20"/>
    <property type="match status" value="1"/>
</dbReference>
<dbReference type="PANTHER" id="PTHR33398">
    <property type="entry name" value="30S RIBOSOMAL PROTEIN S20"/>
    <property type="match status" value="1"/>
</dbReference>
<dbReference type="PANTHER" id="PTHR33398:SF1">
    <property type="entry name" value="SMALL RIBOSOMAL SUBUNIT PROTEIN BS20C"/>
    <property type="match status" value="1"/>
</dbReference>
<dbReference type="Pfam" id="PF01649">
    <property type="entry name" value="Ribosomal_S20p"/>
    <property type="match status" value="1"/>
</dbReference>
<dbReference type="SUPFAM" id="SSF46992">
    <property type="entry name" value="Ribosomal protein S20"/>
    <property type="match status" value="1"/>
</dbReference>
<accession>B7IEV3</accession>